<name>SMRB_ECO7I</name>
<reference key="1">
    <citation type="journal article" date="2009" name="PLoS Genet.">
        <title>Organised genome dynamics in the Escherichia coli species results in highly diverse adaptive paths.</title>
        <authorList>
            <person name="Touchon M."/>
            <person name="Hoede C."/>
            <person name="Tenaillon O."/>
            <person name="Barbe V."/>
            <person name="Baeriswyl S."/>
            <person name="Bidet P."/>
            <person name="Bingen E."/>
            <person name="Bonacorsi S."/>
            <person name="Bouchier C."/>
            <person name="Bouvet O."/>
            <person name="Calteau A."/>
            <person name="Chiapello H."/>
            <person name="Clermont O."/>
            <person name="Cruveiller S."/>
            <person name="Danchin A."/>
            <person name="Diard M."/>
            <person name="Dossat C."/>
            <person name="Karoui M.E."/>
            <person name="Frapy E."/>
            <person name="Garry L."/>
            <person name="Ghigo J.M."/>
            <person name="Gilles A.M."/>
            <person name="Johnson J."/>
            <person name="Le Bouguenec C."/>
            <person name="Lescat M."/>
            <person name="Mangenot S."/>
            <person name="Martinez-Jehanne V."/>
            <person name="Matic I."/>
            <person name="Nassif X."/>
            <person name="Oztas S."/>
            <person name="Petit M.A."/>
            <person name="Pichon C."/>
            <person name="Rouy Z."/>
            <person name="Ruf C.S."/>
            <person name="Schneider D."/>
            <person name="Tourret J."/>
            <person name="Vacherie B."/>
            <person name="Vallenet D."/>
            <person name="Medigue C."/>
            <person name="Rocha E.P.C."/>
            <person name="Denamur E."/>
        </authorList>
    </citation>
    <scope>NUCLEOTIDE SEQUENCE [LARGE SCALE GENOMIC DNA]</scope>
    <source>
        <strain>IAI39 / ExPEC</strain>
    </source>
</reference>
<comment type="function">
    <text evidence="1">Acts as a ribosome collision sensor. Detects stalled/collided disomes (pairs of ribosomes where the leading ribosome is stalled and a second ribosome has collided with it) and endonucleolytically cleaves mRNA at the 5' boundary of the stalled ribosome. Stalled/collided disomes form a new interface (primarily via the 30S subunits) that binds SmrB. Cleaved mRNA becomes available for tmRNA ligation, leading to ribosomal subunit dissociation and rescue of stalled ribosomes.</text>
</comment>
<comment type="subunit">
    <text evidence="1">Associates with collided ribosomes, but not with correctly translating polysomes.</text>
</comment>
<comment type="similarity">
    <text evidence="1">Belongs to the SmrB family.</text>
</comment>
<keyword id="KW-0255">Endonuclease</keyword>
<keyword id="KW-0378">Hydrolase</keyword>
<keyword id="KW-0540">Nuclease</keyword>
<keyword id="KW-0694">RNA-binding</keyword>
<keyword id="KW-0699">rRNA-binding</keyword>
<dbReference type="EC" id="3.1.-.-" evidence="1"/>
<dbReference type="EMBL" id="CU928164">
    <property type="protein sequence ID" value="CAR18606.1"/>
    <property type="molecule type" value="Genomic_DNA"/>
</dbReference>
<dbReference type="RefSeq" id="WP_000730813.1">
    <property type="nucleotide sequence ID" value="NC_011750.1"/>
</dbReference>
<dbReference type="RefSeq" id="YP_002408436.1">
    <property type="nucleotide sequence ID" value="NC_011750.1"/>
</dbReference>
<dbReference type="SMR" id="B7NP12"/>
<dbReference type="STRING" id="585057.ECIAI39_2480"/>
<dbReference type="KEGG" id="ect:ECIAI39_2480"/>
<dbReference type="PATRIC" id="fig|585057.6.peg.2584"/>
<dbReference type="HOGENOM" id="CLU_055978_4_0_6"/>
<dbReference type="Proteomes" id="UP000000749">
    <property type="component" value="Chromosome"/>
</dbReference>
<dbReference type="GO" id="GO:0004521">
    <property type="term" value="F:RNA endonuclease activity"/>
    <property type="evidence" value="ECO:0007669"/>
    <property type="project" value="UniProtKB-UniRule"/>
</dbReference>
<dbReference type="GO" id="GO:0019843">
    <property type="term" value="F:rRNA binding"/>
    <property type="evidence" value="ECO:0007669"/>
    <property type="project" value="UniProtKB-UniRule"/>
</dbReference>
<dbReference type="GO" id="GO:0072344">
    <property type="term" value="P:rescue of stalled ribosome"/>
    <property type="evidence" value="ECO:0007669"/>
    <property type="project" value="UniProtKB-UniRule"/>
</dbReference>
<dbReference type="Gene3D" id="3.30.1370.110">
    <property type="match status" value="1"/>
</dbReference>
<dbReference type="HAMAP" id="MF_01042">
    <property type="entry name" value="SmrB"/>
    <property type="match status" value="1"/>
</dbReference>
<dbReference type="InterPro" id="IPR002625">
    <property type="entry name" value="Smr_dom"/>
</dbReference>
<dbReference type="InterPro" id="IPR036063">
    <property type="entry name" value="Smr_dom_sf"/>
</dbReference>
<dbReference type="InterPro" id="IPR022990">
    <property type="entry name" value="SmrB-like"/>
</dbReference>
<dbReference type="NCBIfam" id="NF003432">
    <property type="entry name" value="PRK04946.1"/>
    <property type="match status" value="1"/>
</dbReference>
<dbReference type="PANTHER" id="PTHR35562">
    <property type="entry name" value="DNA ENDONUCLEASE SMRA-RELATED"/>
    <property type="match status" value="1"/>
</dbReference>
<dbReference type="PANTHER" id="PTHR35562:SF1">
    <property type="entry name" value="UPF0115 PROTEIN YFCN"/>
    <property type="match status" value="1"/>
</dbReference>
<dbReference type="Pfam" id="PF01713">
    <property type="entry name" value="Smr"/>
    <property type="match status" value="1"/>
</dbReference>
<dbReference type="SMART" id="SM00463">
    <property type="entry name" value="SMR"/>
    <property type="match status" value="1"/>
</dbReference>
<dbReference type="SUPFAM" id="SSF160443">
    <property type="entry name" value="SMR domain-like"/>
    <property type="match status" value="1"/>
</dbReference>
<dbReference type="PROSITE" id="PS50828">
    <property type="entry name" value="SMR"/>
    <property type="match status" value="1"/>
</dbReference>
<accession>B7NP12</accession>
<protein>
    <recommendedName>
        <fullName evidence="1">Ribosome rescue factor SmrB</fullName>
        <ecNumber evidence="1">3.1.-.-</ecNumber>
    </recommendedName>
</protein>
<proteinExistence type="inferred from homology"/>
<feature type="chain" id="PRO_1000136037" description="Ribosome rescue factor SmrB">
    <location>
        <begin position="1"/>
        <end position="183"/>
    </location>
</feature>
<feature type="domain" description="Smr" evidence="1">
    <location>
        <begin position="98"/>
        <end position="173"/>
    </location>
</feature>
<sequence length="183" mass="20969">MKKKTTLSEEDQALFRQLMAGTRKIKQDTIVHRPQRKKISEVPVKRLIQEQADASHYFSDEFQPLLNTEGPVKYVRPDVSHFEAKKLRRGDYSPELFLDLHGLTQLQAKQELGALIAACRREHVFCACVMHGHGKHILKQQTPLWLAQHPHVMAFHQAPKVYGGDAALLVLIEVDEWLPPELP</sequence>
<evidence type="ECO:0000255" key="1">
    <source>
        <dbReference type="HAMAP-Rule" id="MF_01042"/>
    </source>
</evidence>
<gene>
    <name evidence="1" type="primary">smrB</name>
    <name type="ordered locus">ECIAI39_2480</name>
</gene>
<organism>
    <name type="scientific">Escherichia coli O7:K1 (strain IAI39 / ExPEC)</name>
    <dbReference type="NCBI Taxonomy" id="585057"/>
    <lineage>
        <taxon>Bacteria</taxon>
        <taxon>Pseudomonadati</taxon>
        <taxon>Pseudomonadota</taxon>
        <taxon>Gammaproteobacteria</taxon>
        <taxon>Enterobacterales</taxon>
        <taxon>Enterobacteriaceae</taxon>
        <taxon>Escherichia</taxon>
    </lineage>
</organism>